<comment type="catalytic activity">
    <reaction evidence="1">
        <text>1-(2-carboxyphenylamino)-1-deoxy-D-ribulose 5-phosphate + H(+) = (1S,2R)-1-C-(indol-3-yl)glycerol 3-phosphate + CO2 + H2O</text>
        <dbReference type="Rhea" id="RHEA:23476"/>
        <dbReference type="ChEBI" id="CHEBI:15377"/>
        <dbReference type="ChEBI" id="CHEBI:15378"/>
        <dbReference type="ChEBI" id="CHEBI:16526"/>
        <dbReference type="ChEBI" id="CHEBI:58613"/>
        <dbReference type="ChEBI" id="CHEBI:58866"/>
        <dbReference type="EC" id="4.1.1.48"/>
    </reaction>
</comment>
<comment type="pathway">
    <text evidence="1">Amino-acid biosynthesis; L-tryptophan biosynthesis; L-tryptophan from chorismate: step 4/5.</text>
</comment>
<comment type="similarity">
    <text evidence="1">Belongs to the TrpC family.</text>
</comment>
<evidence type="ECO:0000255" key="1">
    <source>
        <dbReference type="HAMAP-Rule" id="MF_00134"/>
    </source>
</evidence>
<keyword id="KW-0028">Amino-acid biosynthesis</keyword>
<keyword id="KW-0057">Aromatic amino acid biosynthesis</keyword>
<keyword id="KW-0210">Decarboxylase</keyword>
<keyword id="KW-0456">Lyase</keyword>
<keyword id="KW-1185">Reference proteome</keyword>
<keyword id="KW-0822">Tryptophan biosynthesis</keyword>
<feature type="chain" id="PRO_0000154214" description="Indole-3-glycerol phosphate synthase">
    <location>
        <begin position="1"/>
        <end position="260"/>
    </location>
</feature>
<sequence length="260" mass="28828">MKDILSEIIANKRFEVDLQKQAISIEQLQEGINEVPASRSMKRALASSDSGIIAEFKRRSPSKGWIKQEARPEEIVPSYLAAGASALSILTDEKFFGGSLKDIRTARPLVDVPIIRKDFIIDEYQLYQAKIVGADAVLLIAAALKQEKCQELAEQAHELGLEVLLEIHSAEELPYINSKIDMIGINNRNLGTFFTDVENSFRLAGQLPQDAVLVSESGISDPEVVKRLRTAGFRGFLIGETFMKTPQPGETLQNFLKAIQ</sequence>
<protein>
    <recommendedName>
        <fullName evidence="1">Indole-3-glycerol phosphate synthase</fullName>
        <shortName evidence="1">IGPS</shortName>
        <ecNumber evidence="1">4.1.1.48</ecNumber>
    </recommendedName>
</protein>
<dbReference type="EC" id="4.1.1.48" evidence="1"/>
<dbReference type="EMBL" id="AE015928">
    <property type="protein sequence ID" value="AAO75636.1"/>
    <property type="molecule type" value="Genomic_DNA"/>
</dbReference>
<dbReference type="RefSeq" id="NP_809442.1">
    <property type="nucleotide sequence ID" value="NC_004663.1"/>
</dbReference>
<dbReference type="RefSeq" id="WP_008765048.1">
    <property type="nucleotide sequence ID" value="NC_004663.1"/>
</dbReference>
<dbReference type="SMR" id="Q8AAD6"/>
<dbReference type="FunCoup" id="Q8AAD6">
    <property type="interactions" value="337"/>
</dbReference>
<dbReference type="STRING" id="226186.BT_0529"/>
<dbReference type="PaxDb" id="226186-BT_0529"/>
<dbReference type="EnsemblBacteria" id="AAO75636">
    <property type="protein sequence ID" value="AAO75636"/>
    <property type="gene ID" value="BT_0529"/>
</dbReference>
<dbReference type="GeneID" id="60926488"/>
<dbReference type="KEGG" id="bth:BT_0529"/>
<dbReference type="PATRIC" id="fig|226186.12.peg.529"/>
<dbReference type="eggNOG" id="COG0134">
    <property type="taxonomic scope" value="Bacteria"/>
</dbReference>
<dbReference type="HOGENOM" id="CLU_034247_2_0_10"/>
<dbReference type="InParanoid" id="Q8AAD6"/>
<dbReference type="OrthoDB" id="9804217at2"/>
<dbReference type="UniPathway" id="UPA00035">
    <property type="reaction ID" value="UER00043"/>
</dbReference>
<dbReference type="Proteomes" id="UP000001414">
    <property type="component" value="Chromosome"/>
</dbReference>
<dbReference type="GO" id="GO:0004425">
    <property type="term" value="F:indole-3-glycerol-phosphate synthase activity"/>
    <property type="evidence" value="ECO:0000318"/>
    <property type="project" value="GO_Central"/>
</dbReference>
<dbReference type="GO" id="GO:0036469">
    <property type="term" value="F:L-tryptophan decarboxylase activity"/>
    <property type="evidence" value="ECO:0000314"/>
    <property type="project" value="UniProt"/>
</dbReference>
<dbReference type="GO" id="GO:0004640">
    <property type="term" value="F:phosphoribosylanthranilate isomerase activity"/>
    <property type="evidence" value="ECO:0000318"/>
    <property type="project" value="GO_Central"/>
</dbReference>
<dbReference type="GO" id="GO:0000162">
    <property type="term" value="P:L-tryptophan biosynthetic process"/>
    <property type="evidence" value="ECO:0000318"/>
    <property type="project" value="GO_Central"/>
</dbReference>
<dbReference type="GO" id="GO:0006568">
    <property type="term" value="P:L-tryptophan metabolic process"/>
    <property type="evidence" value="ECO:0000314"/>
    <property type="project" value="UniProt"/>
</dbReference>
<dbReference type="CDD" id="cd00331">
    <property type="entry name" value="IGPS"/>
    <property type="match status" value="1"/>
</dbReference>
<dbReference type="FunFam" id="3.20.20.70:FF:000024">
    <property type="entry name" value="Indole-3-glycerol phosphate synthase"/>
    <property type="match status" value="1"/>
</dbReference>
<dbReference type="Gene3D" id="3.20.20.70">
    <property type="entry name" value="Aldolase class I"/>
    <property type="match status" value="1"/>
</dbReference>
<dbReference type="HAMAP" id="MF_00134_B">
    <property type="entry name" value="IGPS_B"/>
    <property type="match status" value="1"/>
</dbReference>
<dbReference type="InterPro" id="IPR013785">
    <property type="entry name" value="Aldolase_TIM"/>
</dbReference>
<dbReference type="InterPro" id="IPR045186">
    <property type="entry name" value="Indole-3-glycerol_P_synth"/>
</dbReference>
<dbReference type="InterPro" id="IPR013798">
    <property type="entry name" value="Indole-3-glycerol_P_synth_dom"/>
</dbReference>
<dbReference type="InterPro" id="IPR001468">
    <property type="entry name" value="Indole-3-GlycerolPSynthase_CS"/>
</dbReference>
<dbReference type="InterPro" id="IPR011060">
    <property type="entry name" value="RibuloseP-bd_barrel"/>
</dbReference>
<dbReference type="NCBIfam" id="NF001377">
    <property type="entry name" value="PRK00278.2-4"/>
    <property type="match status" value="1"/>
</dbReference>
<dbReference type="PANTHER" id="PTHR22854:SF2">
    <property type="entry name" value="INDOLE-3-GLYCEROL-PHOSPHATE SYNTHASE"/>
    <property type="match status" value="1"/>
</dbReference>
<dbReference type="PANTHER" id="PTHR22854">
    <property type="entry name" value="TRYPTOPHAN BIOSYNTHESIS PROTEIN"/>
    <property type="match status" value="1"/>
</dbReference>
<dbReference type="Pfam" id="PF00218">
    <property type="entry name" value="IGPS"/>
    <property type="match status" value="1"/>
</dbReference>
<dbReference type="SUPFAM" id="SSF51366">
    <property type="entry name" value="Ribulose-phoshate binding barrel"/>
    <property type="match status" value="1"/>
</dbReference>
<dbReference type="PROSITE" id="PS00614">
    <property type="entry name" value="IGPS"/>
    <property type="match status" value="1"/>
</dbReference>
<organism>
    <name type="scientific">Bacteroides thetaiotaomicron (strain ATCC 29148 / DSM 2079 / JCM 5827 / CCUG 10774 / NCTC 10582 / VPI-5482 / E50)</name>
    <dbReference type="NCBI Taxonomy" id="226186"/>
    <lineage>
        <taxon>Bacteria</taxon>
        <taxon>Pseudomonadati</taxon>
        <taxon>Bacteroidota</taxon>
        <taxon>Bacteroidia</taxon>
        <taxon>Bacteroidales</taxon>
        <taxon>Bacteroidaceae</taxon>
        <taxon>Bacteroides</taxon>
    </lineage>
</organism>
<proteinExistence type="inferred from homology"/>
<accession>Q8AAD6</accession>
<reference key="1">
    <citation type="journal article" date="2003" name="Science">
        <title>A genomic view of the human-Bacteroides thetaiotaomicron symbiosis.</title>
        <authorList>
            <person name="Xu J."/>
            <person name="Bjursell M.K."/>
            <person name="Himrod J."/>
            <person name="Deng S."/>
            <person name="Carmichael L.K."/>
            <person name="Chiang H.C."/>
            <person name="Hooper L.V."/>
            <person name="Gordon J.I."/>
        </authorList>
    </citation>
    <scope>NUCLEOTIDE SEQUENCE [LARGE SCALE GENOMIC DNA]</scope>
    <source>
        <strain>ATCC 29148 / DSM 2079 / JCM 5827 / CCUG 10774 / NCTC 10582 / VPI-5482 / E50</strain>
    </source>
</reference>
<name>TRPC_BACTN</name>
<gene>
    <name evidence="1" type="primary">trpC</name>
    <name type="ordered locus">BT_0529</name>
</gene>